<reference key="1">
    <citation type="journal article" date="2009" name="BMC Genomics">
        <title>Complete genome sequence of the sugarcane nitrogen-fixing endophyte Gluconacetobacter diazotrophicus Pal5.</title>
        <authorList>
            <person name="Bertalan M."/>
            <person name="Albano R."/>
            <person name="de Padua V."/>
            <person name="Rouws L."/>
            <person name="Rojas C."/>
            <person name="Hemerly A."/>
            <person name="Teixeira K."/>
            <person name="Schwab S."/>
            <person name="Araujo J."/>
            <person name="Oliveira A."/>
            <person name="Franca L."/>
            <person name="Magalhaes V."/>
            <person name="Alqueres S."/>
            <person name="Cardoso A."/>
            <person name="Almeida W."/>
            <person name="Loureiro M.M."/>
            <person name="Nogueira E."/>
            <person name="Cidade D."/>
            <person name="Oliveira D."/>
            <person name="Simao T."/>
            <person name="Macedo J."/>
            <person name="Valadao A."/>
            <person name="Dreschsel M."/>
            <person name="Freitas F."/>
            <person name="Vidal M."/>
            <person name="Guedes H."/>
            <person name="Rodrigues E."/>
            <person name="Meneses C."/>
            <person name="Brioso P."/>
            <person name="Pozzer L."/>
            <person name="Figueiredo D."/>
            <person name="Montano H."/>
            <person name="Junior J."/>
            <person name="de Souza Filho G."/>
            <person name="Martin Quintana Flores V."/>
            <person name="Ferreira B."/>
            <person name="Branco A."/>
            <person name="Gonzalez P."/>
            <person name="Guillobel H."/>
            <person name="Lemos M."/>
            <person name="Seibel L."/>
            <person name="Macedo J."/>
            <person name="Alves-Ferreira M."/>
            <person name="Sachetto-Martins G."/>
            <person name="Coelho A."/>
            <person name="Santos E."/>
            <person name="Amaral G."/>
            <person name="Neves A."/>
            <person name="Pacheco A.B."/>
            <person name="Carvalho D."/>
            <person name="Lery L."/>
            <person name="Bisch P."/>
            <person name="Rossle S.C."/>
            <person name="Urmenyi T."/>
            <person name="Rael Pereira A."/>
            <person name="Silva R."/>
            <person name="Rondinelli E."/>
            <person name="von Kruger W."/>
            <person name="Martins O."/>
            <person name="Baldani J.I."/>
            <person name="Ferreira P.C."/>
        </authorList>
    </citation>
    <scope>NUCLEOTIDE SEQUENCE [LARGE SCALE GENOMIC DNA]</scope>
    <source>
        <strain>ATCC 49037 / DSM 5601 / CCUG 37298 / CIP 103539 / LMG 7603 / PAl5</strain>
    </source>
</reference>
<reference key="2">
    <citation type="journal article" date="2010" name="Stand. Genomic Sci.">
        <title>Two genome sequences of the same bacterial strain, Gluconacetobacter diazotrophicus PAl 5, suggest a new standard in genome sequence submission.</title>
        <authorList>
            <person name="Giongo A."/>
            <person name="Tyler H.L."/>
            <person name="Zipperer U.N."/>
            <person name="Triplett E.W."/>
        </authorList>
    </citation>
    <scope>NUCLEOTIDE SEQUENCE [LARGE SCALE GENOMIC DNA]</scope>
    <source>
        <strain>ATCC 49037 / DSM 5601 / CCUG 37298 / CIP 103539 / LMG 7603 / PAl5</strain>
    </source>
</reference>
<feature type="chain" id="PRO_0000366602" description="Ribosomal RNA large subunit methyltransferase H">
    <location>
        <begin position="1"/>
        <end position="152"/>
    </location>
</feature>
<feature type="binding site" evidence="1">
    <location>
        <position position="65"/>
    </location>
    <ligand>
        <name>S-adenosyl-L-methionine</name>
        <dbReference type="ChEBI" id="CHEBI:59789"/>
    </ligand>
</feature>
<feature type="binding site" evidence="1">
    <location>
        <position position="96"/>
    </location>
    <ligand>
        <name>S-adenosyl-L-methionine</name>
        <dbReference type="ChEBI" id="CHEBI:59789"/>
    </ligand>
</feature>
<feature type="binding site" evidence="1">
    <location>
        <begin position="115"/>
        <end position="120"/>
    </location>
    <ligand>
        <name>S-adenosyl-L-methionine</name>
        <dbReference type="ChEBI" id="CHEBI:59789"/>
    </ligand>
</feature>
<feature type="sequence conflict" description="In Ref. 1; CAP54886." evidence="2" ref="1">
    <original>RADDTLSLGPMTWPHMLIRGLLAEQLYRARAIASGHPYHRAGRPA</original>
    <variation>MRAELSHMVDWARTSDPVRTG</variation>
    <location>
        <begin position="108"/>
        <end position="152"/>
    </location>
</feature>
<keyword id="KW-0963">Cytoplasm</keyword>
<keyword id="KW-0489">Methyltransferase</keyword>
<keyword id="KW-1185">Reference proteome</keyword>
<keyword id="KW-0698">rRNA processing</keyword>
<keyword id="KW-0949">S-adenosyl-L-methionine</keyword>
<keyword id="KW-0808">Transferase</keyword>
<protein>
    <recommendedName>
        <fullName evidence="1">Ribosomal RNA large subunit methyltransferase H</fullName>
        <ecNumber evidence="1">2.1.1.177</ecNumber>
    </recommendedName>
    <alternativeName>
        <fullName evidence="1">23S rRNA (pseudouridine1915-N3)-methyltransferase</fullName>
    </alternativeName>
    <alternativeName>
        <fullName evidence="1">23S rRNA m3Psi1915 methyltransferase</fullName>
    </alternativeName>
    <alternativeName>
        <fullName evidence="1">rRNA (pseudouridine-N3-)-methyltransferase RlmH</fullName>
    </alternativeName>
</protein>
<organism>
    <name type="scientific">Gluconacetobacter diazotrophicus (strain ATCC 49037 / DSM 5601 / CCUG 37298 / CIP 103539 / LMG 7603 / PAl5)</name>
    <dbReference type="NCBI Taxonomy" id="272568"/>
    <lineage>
        <taxon>Bacteria</taxon>
        <taxon>Pseudomonadati</taxon>
        <taxon>Pseudomonadota</taxon>
        <taxon>Alphaproteobacteria</taxon>
        <taxon>Acetobacterales</taxon>
        <taxon>Acetobacteraceae</taxon>
        <taxon>Gluconacetobacter</taxon>
    </lineage>
</organism>
<name>RLMH_GLUDA</name>
<sequence length="152" mass="16745">MRLIAVGRMKDRVERDLFQRYAERLSPRLDLVEVAEGRGAPAEIKRREGQALLSALPDRAFAVALDEGGRAHDSLAFARVLERWLGLSRPVCFLVGGAEGLDGPVLARADDTLSLGPMTWPHMLIRGLLAEQLYRARAIASGHPYHRAGRPA</sequence>
<gene>
    <name evidence="1" type="primary">rlmH</name>
    <name type="ordered locus">GDI0943</name>
    <name type="ordered locus">Gdia_1082</name>
</gene>
<evidence type="ECO:0000255" key="1">
    <source>
        <dbReference type="HAMAP-Rule" id="MF_00658"/>
    </source>
</evidence>
<evidence type="ECO:0000305" key="2"/>
<accession>A9HC19</accession>
<accession>B5ZGF7</accession>
<comment type="function">
    <text evidence="1">Specifically methylates the pseudouridine at position 1915 (m3Psi1915) in 23S rRNA.</text>
</comment>
<comment type="catalytic activity">
    <reaction evidence="1">
        <text>pseudouridine(1915) in 23S rRNA + S-adenosyl-L-methionine = N(3)-methylpseudouridine(1915) in 23S rRNA + S-adenosyl-L-homocysteine + H(+)</text>
        <dbReference type="Rhea" id="RHEA:42752"/>
        <dbReference type="Rhea" id="RHEA-COMP:10221"/>
        <dbReference type="Rhea" id="RHEA-COMP:10222"/>
        <dbReference type="ChEBI" id="CHEBI:15378"/>
        <dbReference type="ChEBI" id="CHEBI:57856"/>
        <dbReference type="ChEBI" id="CHEBI:59789"/>
        <dbReference type="ChEBI" id="CHEBI:65314"/>
        <dbReference type="ChEBI" id="CHEBI:74486"/>
        <dbReference type="EC" id="2.1.1.177"/>
    </reaction>
</comment>
<comment type="subunit">
    <text evidence="1">Homodimer.</text>
</comment>
<comment type="subcellular location">
    <subcellularLocation>
        <location evidence="1">Cytoplasm</location>
    </subcellularLocation>
</comment>
<comment type="similarity">
    <text evidence="1">Belongs to the RNA methyltransferase RlmH family.</text>
</comment>
<dbReference type="EC" id="2.1.1.177" evidence="1"/>
<dbReference type="EMBL" id="AM889285">
    <property type="protein sequence ID" value="CAP54886.1"/>
    <property type="molecule type" value="Genomic_DNA"/>
</dbReference>
<dbReference type="EMBL" id="CP001189">
    <property type="protein sequence ID" value="ACI50865.1"/>
    <property type="molecule type" value="Genomic_DNA"/>
</dbReference>
<dbReference type="RefSeq" id="WP_012553575.1">
    <property type="nucleotide sequence ID" value="NC_011365.1"/>
</dbReference>
<dbReference type="SMR" id="A9HC19"/>
<dbReference type="STRING" id="272568.GDI0943"/>
<dbReference type="KEGG" id="gdi:GDI0943"/>
<dbReference type="KEGG" id="gdj:Gdia_1082"/>
<dbReference type="eggNOG" id="COG1576">
    <property type="taxonomic scope" value="Bacteria"/>
</dbReference>
<dbReference type="HOGENOM" id="CLU_100552_1_0_5"/>
<dbReference type="Proteomes" id="UP000001176">
    <property type="component" value="Chromosome"/>
</dbReference>
<dbReference type="GO" id="GO:0005737">
    <property type="term" value="C:cytoplasm"/>
    <property type="evidence" value="ECO:0007669"/>
    <property type="project" value="UniProtKB-SubCell"/>
</dbReference>
<dbReference type="GO" id="GO:0070038">
    <property type="term" value="F:rRNA (pseudouridine-N3-)-methyltransferase activity"/>
    <property type="evidence" value="ECO:0007669"/>
    <property type="project" value="UniProtKB-UniRule"/>
</dbReference>
<dbReference type="CDD" id="cd18081">
    <property type="entry name" value="RlmH-like"/>
    <property type="match status" value="1"/>
</dbReference>
<dbReference type="Gene3D" id="3.40.1280.10">
    <property type="match status" value="1"/>
</dbReference>
<dbReference type="HAMAP" id="MF_00658">
    <property type="entry name" value="23SrRNA_methyltr_H"/>
    <property type="match status" value="1"/>
</dbReference>
<dbReference type="InterPro" id="IPR029028">
    <property type="entry name" value="Alpha/beta_knot_MTases"/>
</dbReference>
<dbReference type="InterPro" id="IPR003742">
    <property type="entry name" value="RlmH-like"/>
</dbReference>
<dbReference type="InterPro" id="IPR029026">
    <property type="entry name" value="tRNA_m1G_MTases_N"/>
</dbReference>
<dbReference type="PANTHER" id="PTHR33603">
    <property type="entry name" value="METHYLTRANSFERASE"/>
    <property type="match status" value="1"/>
</dbReference>
<dbReference type="PANTHER" id="PTHR33603:SF1">
    <property type="entry name" value="RIBOSOMAL RNA LARGE SUBUNIT METHYLTRANSFERASE H"/>
    <property type="match status" value="1"/>
</dbReference>
<dbReference type="Pfam" id="PF02590">
    <property type="entry name" value="SPOUT_MTase"/>
    <property type="match status" value="1"/>
</dbReference>
<dbReference type="PIRSF" id="PIRSF004505">
    <property type="entry name" value="MT_bac"/>
    <property type="match status" value="1"/>
</dbReference>
<dbReference type="SUPFAM" id="SSF75217">
    <property type="entry name" value="alpha/beta knot"/>
    <property type="match status" value="1"/>
</dbReference>
<proteinExistence type="inferred from homology"/>